<sequence>MKLLAVRRLFRIQRVVIRYRLDDLLFDLPLPWWLRSLRLLMPWRWLPRTPSELSRGARLRLALQDLGPIFIKFGQLLSTRRDLLPTDIADELMLLQDRVPPFDPKQAVALIESQLGAKVGEVFSRFDVEPLASASVAQVHAARLKTGEEVVVKVVRPGLKPVIAQDLAWLFLIAKGAERASADARRLHPVEIVGDYEKTIYDELDLLREAANASQLRRNFEGSELMYVPQVYWDLCRPKVLVMERIYGVPVTDMATLADQRTDMKLLAERGVEVFFTQVFRHSFFHADMHPGNIFVSTVKPWSPQYIAIDCGIVGSLTAEDQDYLARNLIAFFKRDYRRVAELHIDSGWVPAHTKVNEFEAAIRTVCEPIFEKPLKDISFGQVLMRLFQTARRFNMEVQPQLVLLQKTLLNIEGLGRQLYPDLDLWSTAKPFLERWMRERYSPKAMFGNLYSQAEQLPHLAGMTRDLLERLSQPHLHDPQLPERRRQGDRWALRLLGAGLLGGGAVLAASAAEAASLAAPAAWPAWLMLAAGLYLIVRQ</sequence>
<accession>B1J2S6</accession>
<dbReference type="EC" id="2.7.-.-" evidence="1"/>
<dbReference type="EMBL" id="CP000949">
    <property type="protein sequence ID" value="ACA70957.1"/>
    <property type="molecule type" value="Genomic_DNA"/>
</dbReference>
<dbReference type="SMR" id="B1J2S6"/>
<dbReference type="STRING" id="390235.PputW619_0452"/>
<dbReference type="KEGG" id="ppw:PputW619_0452"/>
<dbReference type="eggNOG" id="COG0661">
    <property type="taxonomic scope" value="Bacteria"/>
</dbReference>
<dbReference type="HOGENOM" id="CLU_006533_0_0_6"/>
<dbReference type="OrthoDB" id="9795390at2"/>
<dbReference type="UniPathway" id="UPA00232"/>
<dbReference type="GO" id="GO:0005886">
    <property type="term" value="C:plasma membrane"/>
    <property type="evidence" value="ECO:0007669"/>
    <property type="project" value="UniProtKB-SubCell"/>
</dbReference>
<dbReference type="GO" id="GO:0005524">
    <property type="term" value="F:ATP binding"/>
    <property type="evidence" value="ECO:0007669"/>
    <property type="project" value="UniProtKB-KW"/>
</dbReference>
<dbReference type="GO" id="GO:0004672">
    <property type="term" value="F:protein kinase activity"/>
    <property type="evidence" value="ECO:0007669"/>
    <property type="project" value="UniProtKB-UniRule"/>
</dbReference>
<dbReference type="GO" id="GO:0010795">
    <property type="term" value="P:regulation of ubiquinone biosynthetic process"/>
    <property type="evidence" value="ECO:0007669"/>
    <property type="project" value="UniProtKB-UniRule"/>
</dbReference>
<dbReference type="GO" id="GO:0006744">
    <property type="term" value="P:ubiquinone biosynthetic process"/>
    <property type="evidence" value="ECO:0007669"/>
    <property type="project" value="UniProtKB-UniPathway"/>
</dbReference>
<dbReference type="CDD" id="cd13972">
    <property type="entry name" value="UbiB"/>
    <property type="match status" value="1"/>
</dbReference>
<dbReference type="HAMAP" id="MF_00414">
    <property type="entry name" value="UbiB"/>
    <property type="match status" value="1"/>
</dbReference>
<dbReference type="InterPro" id="IPR004147">
    <property type="entry name" value="ABC1_dom"/>
</dbReference>
<dbReference type="InterPro" id="IPR011009">
    <property type="entry name" value="Kinase-like_dom_sf"/>
</dbReference>
<dbReference type="InterPro" id="IPR010232">
    <property type="entry name" value="UbiB"/>
</dbReference>
<dbReference type="InterPro" id="IPR045308">
    <property type="entry name" value="UbiB_bact"/>
</dbReference>
<dbReference type="InterPro" id="IPR050154">
    <property type="entry name" value="UbiB_kinase"/>
</dbReference>
<dbReference type="NCBIfam" id="NF003404">
    <property type="entry name" value="PRK04750.1"/>
    <property type="match status" value="1"/>
</dbReference>
<dbReference type="NCBIfam" id="TIGR01982">
    <property type="entry name" value="UbiB"/>
    <property type="match status" value="1"/>
</dbReference>
<dbReference type="PANTHER" id="PTHR10566">
    <property type="entry name" value="CHAPERONE-ACTIVITY OF BC1 COMPLEX CABC1 -RELATED"/>
    <property type="match status" value="1"/>
</dbReference>
<dbReference type="PANTHER" id="PTHR10566:SF113">
    <property type="entry name" value="PROTEIN ACTIVITY OF BC1 COMPLEX KINASE 7, CHLOROPLASTIC"/>
    <property type="match status" value="1"/>
</dbReference>
<dbReference type="Pfam" id="PF03109">
    <property type="entry name" value="ABC1"/>
    <property type="match status" value="1"/>
</dbReference>
<dbReference type="SUPFAM" id="SSF56112">
    <property type="entry name" value="Protein kinase-like (PK-like)"/>
    <property type="match status" value="1"/>
</dbReference>
<feature type="chain" id="PRO_1000123915" description="Probable protein kinase UbiB">
    <location>
        <begin position="1"/>
        <end position="539"/>
    </location>
</feature>
<feature type="transmembrane region" description="Helical" evidence="1">
    <location>
        <begin position="495"/>
        <end position="515"/>
    </location>
</feature>
<feature type="transmembrane region" description="Helical" evidence="1">
    <location>
        <begin position="517"/>
        <end position="537"/>
    </location>
</feature>
<feature type="domain" description="Protein kinase" evidence="1">
    <location>
        <begin position="125"/>
        <end position="493"/>
    </location>
</feature>
<feature type="active site" description="Proton acceptor" evidence="1">
    <location>
        <position position="288"/>
    </location>
</feature>
<feature type="binding site" evidence="1">
    <location>
        <begin position="131"/>
        <end position="139"/>
    </location>
    <ligand>
        <name>ATP</name>
        <dbReference type="ChEBI" id="CHEBI:30616"/>
    </ligand>
</feature>
<feature type="binding site" evidence="1">
    <location>
        <position position="153"/>
    </location>
    <ligand>
        <name>ATP</name>
        <dbReference type="ChEBI" id="CHEBI:30616"/>
    </ligand>
</feature>
<organism>
    <name type="scientific">Pseudomonas putida (strain W619)</name>
    <dbReference type="NCBI Taxonomy" id="390235"/>
    <lineage>
        <taxon>Bacteria</taxon>
        <taxon>Pseudomonadati</taxon>
        <taxon>Pseudomonadota</taxon>
        <taxon>Gammaproteobacteria</taxon>
        <taxon>Pseudomonadales</taxon>
        <taxon>Pseudomonadaceae</taxon>
        <taxon>Pseudomonas</taxon>
    </lineage>
</organism>
<reference key="1">
    <citation type="submission" date="2008-02" db="EMBL/GenBank/DDBJ databases">
        <title>Complete sequence of Pseudomonas putida W619.</title>
        <authorList>
            <person name="Copeland A."/>
            <person name="Lucas S."/>
            <person name="Lapidus A."/>
            <person name="Barry K."/>
            <person name="Detter J.C."/>
            <person name="Glavina del Rio T."/>
            <person name="Dalin E."/>
            <person name="Tice H."/>
            <person name="Pitluck S."/>
            <person name="Chain P."/>
            <person name="Malfatti S."/>
            <person name="Shin M."/>
            <person name="Vergez L."/>
            <person name="Schmutz J."/>
            <person name="Larimer F."/>
            <person name="Land M."/>
            <person name="Hauser L."/>
            <person name="Kyrpides N."/>
            <person name="Kim E."/>
            <person name="Taghavi S."/>
            <person name="Vangronsveld D."/>
            <person name="van der Lelie D."/>
            <person name="Richardson P."/>
        </authorList>
    </citation>
    <scope>NUCLEOTIDE SEQUENCE [LARGE SCALE GENOMIC DNA]</scope>
    <source>
        <strain>W619</strain>
    </source>
</reference>
<keyword id="KW-0067">ATP-binding</keyword>
<keyword id="KW-0997">Cell inner membrane</keyword>
<keyword id="KW-1003">Cell membrane</keyword>
<keyword id="KW-0418">Kinase</keyword>
<keyword id="KW-0472">Membrane</keyword>
<keyword id="KW-0547">Nucleotide-binding</keyword>
<keyword id="KW-0808">Transferase</keyword>
<keyword id="KW-0812">Transmembrane</keyword>
<keyword id="KW-1133">Transmembrane helix</keyword>
<keyword id="KW-0831">Ubiquinone biosynthesis</keyword>
<gene>
    <name evidence="1" type="primary">ubiB</name>
    <name type="ordered locus">PputW619_0452</name>
</gene>
<proteinExistence type="inferred from homology"/>
<comment type="function">
    <text evidence="1">Is probably a protein kinase regulator of UbiI activity which is involved in aerobic coenzyme Q (ubiquinone) biosynthesis.</text>
</comment>
<comment type="pathway">
    <text>Cofactor biosynthesis; ubiquinone biosynthesis [regulation].</text>
</comment>
<comment type="subcellular location">
    <subcellularLocation>
        <location evidence="1">Cell inner membrane</location>
        <topology evidence="1">Multi-pass membrane protein</topology>
    </subcellularLocation>
</comment>
<comment type="similarity">
    <text evidence="1">Belongs to the ABC1 family. UbiB subfamily.</text>
</comment>
<name>UBIB_PSEPW</name>
<protein>
    <recommendedName>
        <fullName evidence="1">Probable protein kinase UbiB</fullName>
        <ecNumber evidence="1">2.7.-.-</ecNumber>
    </recommendedName>
    <alternativeName>
        <fullName evidence="1">Ubiquinone biosynthesis protein UbiB</fullName>
    </alternativeName>
</protein>
<evidence type="ECO:0000255" key="1">
    <source>
        <dbReference type="HAMAP-Rule" id="MF_00414"/>
    </source>
</evidence>